<comment type="function">
    <text evidence="1">Necessary for the introduction of cis unsaturation into fatty acids. Catalyzes the dehydration of (3R)-3-hydroxydecanoyl-ACP to E-(2)-decenoyl-ACP and then its isomerization to Z-(3)-decenoyl-ACP. Can catalyze the dehydratase reaction for beta-hydroxyacyl-ACPs with saturated chain lengths up to 16:0, being most active on intermediate chain length.</text>
</comment>
<comment type="catalytic activity">
    <reaction evidence="1">
        <text>a (3R)-hydroxyacyl-[ACP] = a (2E)-enoyl-[ACP] + H2O</text>
        <dbReference type="Rhea" id="RHEA:13097"/>
        <dbReference type="Rhea" id="RHEA-COMP:9925"/>
        <dbReference type="Rhea" id="RHEA-COMP:9945"/>
        <dbReference type="ChEBI" id="CHEBI:15377"/>
        <dbReference type="ChEBI" id="CHEBI:78784"/>
        <dbReference type="ChEBI" id="CHEBI:78827"/>
        <dbReference type="EC" id="4.2.1.59"/>
    </reaction>
</comment>
<comment type="catalytic activity">
    <reaction evidence="1">
        <text>(3R)-hydroxydecanoyl-[ACP] = (2E)-decenoyl-[ACP] + H2O</text>
        <dbReference type="Rhea" id="RHEA:41860"/>
        <dbReference type="Rhea" id="RHEA-COMP:9638"/>
        <dbReference type="Rhea" id="RHEA-COMP:9639"/>
        <dbReference type="ChEBI" id="CHEBI:15377"/>
        <dbReference type="ChEBI" id="CHEBI:78466"/>
        <dbReference type="ChEBI" id="CHEBI:78467"/>
    </reaction>
</comment>
<comment type="catalytic activity">
    <reaction evidence="1">
        <text>(2E)-decenoyl-[ACP] = (3Z)-decenoyl-[ACP]</text>
        <dbReference type="Rhea" id="RHEA:23568"/>
        <dbReference type="Rhea" id="RHEA-COMP:9639"/>
        <dbReference type="Rhea" id="RHEA-COMP:9927"/>
        <dbReference type="ChEBI" id="CHEBI:78467"/>
        <dbReference type="ChEBI" id="CHEBI:78798"/>
        <dbReference type="EC" id="5.3.3.14"/>
    </reaction>
</comment>
<comment type="pathway">
    <text evidence="1">Lipid metabolism; fatty acid biosynthesis.</text>
</comment>
<comment type="subunit">
    <text evidence="1">Homodimer.</text>
</comment>
<comment type="subcellular location">
    <subcellularLocation>
        <location evidence="1">Cytoplasm</location>
    </subcellularLocation>
</comment>
<comment type="similarity">
    <text evidence="1">Belongs to the thioester dehydratase family. FabA subfamily.</text>
</comment>
<feature type="chain" id="PRO_1000201218" description="3-hydroxydecanoyl-[acyl-carrier-protein] dehydratase">
    <location>
        <begin position="1"/>
        <end position="171"/>
    </location>
</feature>
<feature type="active site" evidence="1">
    <location>
        <position position="70"/>
    </location>
</feature>
<proteinExistence type="inferred from homology"/>
<reference key="1">
    <citation type="submission" date="2006-09" db="EMBL/GenBank/DDBJ databases">
        <title>Complete sequence of chromosome 1 of Shewanella sp. ANA-3.</title>
        <authorList>
            <person name="Copeland A."/>
            <person name="Lucas S."/>
            <person name="Lapidus A."/>
            <person name="Barry K."/>
            <person name="Detter J.C."/>
            <person name="Glavina del Rio T."/>
            <person name="Hammon N."/>
            <person name="Israni S."/>
            <person name="Dalin E."/>
            <person name="Tice H."/>
            <person name="Pitluck S."/>
            <person name="Chertkov O."/>
            <person name="Brettin T."/>
            <person name="Bruce D."/>
            <person name="Han C."/>
            <person name="Tapia R."/>
            <person name="Gilna P."/>
            <person name="Schmutz J."/>
            <person name="Larimer F."/>
            <person name="Land M."/>
            <person name="Hauser L."/>
            <person name="Kyrpides N."/>
            <person name="Kim E."/>
            <person name="Newman D."/>
            <person name="Salticov C."/>
            <person name="Konstantinidis K."/>
            <person name="Klappenback J."/>
            <person name="Tiedje J."/>
            <person name="Richardson P."/>
        </authorList>
    </citation>
    <scope>NUCLEOTIDE SEQUENCE [LARGE SCALE GENOMIC DNA]</scope>
    <source>
        <strain>ANA-3</strain>
    </source>
</reference>
<sequence length="171" mass="18694">MNKANSFNKEELIACGHGNLFGPNSPRLPVDNMLMIDRIITINDNGGEFGKGEIVAELDINPDLWFFGCHFISDPVMPGCLGLDAMWQLVGFYLGWEGAEGKGRALGVGEVKFTGQVLPGAKKVTYKLNIKRTIHRKLVMGIADAILEVDGRQIYSATDLKVGVFSDTSTF</sequence>
<gene>
    <name evidence="1" type="primary">fabA</name>
    <name type="ordered locus">Shewana3_1606</name>
</gene>
<organism>
    <name type="scientific">Shewanella sp. (strain ANA-3)</name>
    <dbReference type="NCBI Taxonomy" id="94122"/>
    <lineage>
        <taxon>Bacteria</taxon>
        <taxon>Pseudomonadati</taxon>
        <taxon>Pseudomonadota</taxon>
        <taxon>Gammaproteobacteria</taxon>
        <taxon>Alteromonadales</taxon>
        <taxon>Shewanellaceae</taxon>
        <taxon>Shewanella</taxon>
    </lineage>
</organism>
<keyword id="KW-0963">Cytoplasm</keyword>
<keyword id="KW-0275">Fatty acid biosynthesis</keyword>
<keyword id="KW-0276">Fatty acid metabolism</keyword>
<keyword id="KW-0413">Isomerase</keyword>
<keyword id="KW-0444">Lipid biosynthesis</keyword>
<keyword id="KW-0443">Lipid metabolism</keyword>
<keyword id="KW-0456">Lyase</keyword>
<protein>
    <recommendedName>
        <fullName evidence="1">3-hydroxydecanoyl-[acyl-carrier-protein] dehydratase</fullName>
        <ecNumber evidence="1">4.2.1.59</ecNumber>
    </recommendedName>
    <alternativeName>
        <fullName evidence="1">3-hydroxyacyl-[acyl-carrier-protein] dehydratase FabA</fullName>
    </alternativeName>
    <alternativeName>
        <fullName evidence="1">Beta-hydroxydecanoyl thioester dehydrase</fullName>
    </alternativeName>
    <alternativeName>
        <fullName evidence="1">Trans-2-decenoyl-[acyl-carrier-protein] isomerase</fullName>
        <ecNumber evidence="1">5.3.3.14</ecNumber>
    </alternativeName>
</protein>
<name>FABA_SHESA</name>
<evidence type="ECO:0000255" key="1">
    <source>
        <dbReference type="HAMAP-Rule" id="MF_00405"/>
    </source>
</evidence>
<accession>A0KVM1</accession>
<dbReference type="EC" id="4.2.1.59" evidence="1"/>
<dbReference type="EC" id="5.3.3.14" evidence="1"/>
<dbReference type="EMBL" id="CP000469">
    <property type="protein sequence ID" value="ABK47840.1"/>
    <property type="molecule type" value="Genomic_DNA"/>
</dbReference>
<dbReference type="RefSeq" id="WP_011625892.1">
    <property type="nucleotide sequence ID" value="NC_008577.1"/>
</dbReference>
<dbReference type="SMR" id="A0KVM1"/>
<dbReference type="STRING" id="94122.Shewana3_1606"/>
<dbReference type="GeneID" id="94727600"/>
<dbReference type="KEGG" id="shn:Shewana3_1606"/>
<dbReference type="eggNOG" id="COG0764">
    <property type="taxonomic scope" value="Bacteria"/>
</dbReference>
<dbReference type="HOGENOM" id="CLU_097925_0_0_6"/>
<dbReference type="OrthoDB" id="9786735at2"/>
<dbReference type="UniPathway" id="UPA00094"/>
<dbReference type="Proteomes" id="UP000002589">
    <property type="component" value="Chromosome"/>
</dbReference>
<dbReference type="GO" id="GO:0005737">
    <property type="term" value="C:cytoplasm"/>
    <property type="evidence" value="ECO:0007669"/>
    <property type="project" value="UniProtKB-SubCell"/>
</dbReference>
<dbReference type="GO" id="GO:0019171">
    <property type="term" value="F:(3R)-hydroxyacyl-[acyl-carrier-protein] dehydratase activity"/>
    <property type="evidence" value="ECO:0007669"/>
    <property type="project" value="UniProtKB-UniRule"/>
</dbReference>
<dbReference type="GO" id="GO:0034017">
    <property type="term" value="F:trans-2-decenoyl-acyl-carrier-protein isomerase activity"/>
    <property type="evidence" value="ECO:0007669"/>
    <property type="project" value="UniProtKB-UniRule"/>
</dbReference>
<dbReference type="GO" id="GO:0006636">
    <property type="term" value="P:unsaturated fatty acid biosynthetic process"/>
    <property type="evidence" value="ECO:0007669"/>
    <property type="project" value="UniProtKB-UniRule"/>
</dbReference>
<dbReference type="CDD" id="cd01287">
    <property type="entry name" value="FabA"/>
    <property type="match status" value="1"/>
</dbReference>
<dbReference type="Gene3D" id="3.10.129.10">
    <property type="entry name" value="Hotdog Thioesterase"/>
    <property type="match status" value="1"/>
</dbReference>
<dbReference type="HAMAP" id="MF_00405">
    <property type="entry name" value="FabA"/>
    <property type="match status" value="1"/>
</dbReference>
<dbReference type="InterPro" id="IPR010083">
    <property type="entry name" value="FabA"/>
</dbReference>
<dbReference type="InterPro" id="IPR013114">
    <property type="entry name" value="FabA_FabZ"/>
</dbReference>
<dbReference type="InterPro" id="IPR029069">
    <property type="entry name" value="HotDog_dom_sf"/>
</dbReference>
<dbReference type="NCBIfam" id="TIGR01749">
    <property type="entry name" value="fabA"/>
    <property type="match status" value="1"/>
</dbReference>
<dbReference type="NCBIfam" id="NF003509">
    <property type="entry name" value="PRK05174.1"/>
    <property type="match status" value="1"/>
</dbReference>
<dbReference type="PANTHER" id="PTHR30272">
    <property type="entry name" value="3-HYDROXYACYL-[ACYL-CARRIER-PROTEIN] DEHYDRATASE"/>
    <property type="match status" value="1"/>
</dbReference>
<dbReference type="PANTHER" id="PTHR30272:SF8">
    <property type="entry name" value="3-HYDROXYDECANOYL-[ACYL-CARRIER-PROTEIN] DEHYDRATASE"/>
    <property type="match status" value="1"/>
</dbReference>
<dbReference type="Pfam" id="PF07977">
    <property type="entry name" value="FabA"/>
    <property type="match status" value="1"/>
</dbReference>
<dbReference type="SUPFAM" id="SSF54637">
    <property type="entry name" value="Thioesterase/thiol ester dehydrase-isomerase"/>
    <property type="match status" value="1"/>
</dbReference>